<feature type="chain" id="PRO_0000341113" description="D-alanine--D-alanine ligase">
    <location>
        <begin position="1"/>
        <end position="316"/>
    </location>
</feature>
<feature type="domain" description="ATP-grasp" evidence="2">
    <location>
        <begin position="112"/>
        <end position="310"/>
    </location>
</feature>
<feature type="binding site" evidence="2">
    <location>
        <begin position="139"/>
        <end position="189"/>
    </location>
    <ligand>
        <name>ATP</name>
        <dbReference type="ChEBI" id="CHEBI:30616"/>
    </ligand>
</feature>
<feature type="binding site" evidence="2">
    <location>
        <position position="261"/>
    </location>
    <ligand>
        <name>Mg(2+)</name>
        <dbReference type="ChEBI" id="CHEBI:18420"/>
        <label>1</label>
    </ligand>
</feature>
<feature type="binding site" evidence="2">
    <location>
        <position position="277"/>
    </location>
    <ligand>
        <name>Mg(2+)</name>
        <dbReference type="ChEBI" id="CHEBI:18420"/>
        <label>1</label>
    </ligand>
</feature>
<feature type="binding site" evidence="2">
    <location>
        <position position="277"/>
    </location>
    <ligand>
        <name>Mg(2+)</name>
        <dbReference type="ChEBI" id="CHEBI:18420"/>
        <label>2</label>
    </ligand>
</feature>
<feature type="binding site" evidence="2">
    <location>
        <position position="279"/>
    </location>
    <ligand>
        <name>Mg(2+)</name>
        <dbReference type="ChEBI" id="CHEBI:18420"/>
        <label>2</label>
    </ligand>
</feature>
<proteinExistence type="inferred from homology"/>
<comment type="function">
    <text evidence="2">Cell wall formation.</text>
</comment>
<comment type="catalytic activity">
    <reaction evidence="2">
        <text>2 D-alanine + ATP = D-alanyl-D-alanine + ADP + phosphate + H(+)</text>
        <dbReference type="Rhea" id="RHEA:11224"/>
        <dbReference type="ChEBI" id="CHEBI:15378"/>
        <dbReference type="ChEBI" id="CHEBI:30616"/>
        <dbReference type="ChEBI" id="CHEBI:43474"/>
        <dbReference type="ChEBI" id="CHEBI:57416"/>
        <dbReference type="ChEBI" id="CHEBI:57822"/>
        <dbReference type="ChEBI" id="CHEBI:456216"/>
        <dbReference type="EC" id="6.3.2.4"/>
    </reaction>
</comment>
<comment type="cofactor">
    <cofactor evidence="1">
        <name>Mg(2+)</name>
        <dbReference type="ChEBI" id="CHEBI:18420"/>
    </cofactor>
    <cofactor evidence="1">
        <name>Mn(2+)</name>
        <dbReference type="ChEBI" id="CHEBI:29035"/>
    </cofactor>
    <text evidence="1">Binds 2 magnesium or manganese ions per subunit.</text>
</comment>
<comment type="pathway">
    <text evidence="2">Cell wall biogenesis; peptidoglycan biosynthesis.</text>
</comment>
<comment type="subcellular location">
    <subcellularLocation>
        <location evidence="2">Cytoplasm</location>
    </subcellularLocation>
</comment>
<comment type="similarity">
    <text evidence="2">Belongs to the D-alanine--D-alanine ligase family.</text>
</comment>
<gene>
    <name evidence="2" type="primary">ddl</name>
    <name type="ordered locus">Jann_2753</name>
</gene>
<name>DDL_JANSC</name>
<sequence>MAGLSSLPSRVVVLMGGPSAEREVSLSTGRGCAEALRGEGFDVIEVDPGVTHAGAELCARLQEIQPDVVFNALHGRWGEDGCVQGLLEWMRLPYTHSGVLSSALAMDKTRAKTALKAHGLPVVDSIIAPKEAVVAAHVMATPYVVKPNNEGSSVGVYLVNEAANGPPHLSDDMPDEVMVETYAPGRELTVSVLGDAPGDPGALTVTDILTDGWYDYDAKYKPGGSRHVVPAQIPQEIWDACMDMAVRAHTILGCKGVSRTDYRWDEARGLDGLIILEVNTQPGMTPTSLTPEQGEAVGMSFGKLCRWLVEDATCDR</sequence>
<evidence type="ECO:0000250" key="1"/>
<evidence type="ECO:0000255" key="2">
    <source>
        <dbReference type="HAMAP-Rule" id="MF_00047"/>
    </source>
</evidence>
<accession>Q28NP2</accession>
<dbReference type="EC" id="6.3.2.4" evidence="2"/>
<dbReference type="EMBL" id="CP000264">
    <property type="protein sequence ID" value="ABD55670.1"/>
    <property type="molecule type" value="Genomic_DNA"/>
</dbReference>
<dbReference type="SMR" id="Q28NP2"/>
<dbReference type="STRING" id="290400.Jann_2753"/>
<dbReference type="KEGG" id="jan:Jann_2753"/>
<dbReference type="eggNOG" id="COG1181">
    <property type="taxonomic scope" value="Bacteria"/>
</dbReference>
<dbReference type="HOGENOM" id="CLU_039268_1_1_5"/>
<dbReference type="OrthoDB" id="9813261at2"/>
<dbReference type="UniPathway" id="UPA00219"/>
<dbReference type="Proteomes" id="UP000008326">
    <property type="component" value="Chromosome"/>
</dbReference>
<dbReference type="GO" id="GO:0005737">
    <property type="term" value="C:cytoplasm"/>
    <property type="evidence" value="ECO:0007669"/>
    <property type="project" value="UniProtKB-SubCell"/>
</dbReference>
<dbReference type="GO" id="GO:0005524">
    <property type="term" value="F:ATP binding"/>
    <property type="evidence" value="ECO:0007669"/>
    <property type="project" value="UniProtKB-KW"/>
</dbReference>
<dbReference type="GO" id="GO:0008716">
    <property type="term" value="F:D-alanine-D-alanine ligase activity"/>
    <property type="evidence" value="ECO:0007669"/>
    <property type="project" value="UniProtKB-UniRule"/>
</dbReference>
<dbReference type="GO" id="GO:0046872">
    <property type="term" value="F:metal ion binding"/>
    <property type="evidence" value="ECO:0007669"/>
    <property type="project" value="UniProtKB-KW"/>
</dbReference>
<dbReference type="GO" id="GO:0071555">
    <property type="term" value="P:cell wall organization"/>
    <property type="evidence" value="ECO:0007669"/>
    <property type="project" value="UniProtKB-KW"/>
</dbReference>
<dbReference type="GO" id="GO:0009252">
    <property type="term" value="P:peptidoglycan biosynthetic process"/>
    <property type="evidence" value="ECO:0007669"/>
    <property type="project" value="UniProtKB-UniRule"/>
</dbReference>
<dbReference type="GO" id="GO:0008360">
    <property type="term" value="P:regulation of cell shape"/>
    <property type="evidence" value="ECO:0007669"/>
    <property type="project" value="UniProtKB-KW"/>
</dbReference>
<dbReference type="Gene3D" id="3.40.50.20">
    <property type="match status" value="1"/>
</dbReference>
<dbReference type="Gene3D" id="3.30.1490.20">
    <property type="entry name" value="ATP-grasp fold, A domain"/>
    <property type="match status" value="1"/>
</dbReference>
<dbReference type="Gene3D" id="3.30.470.20">
    <property type="entry name" value="ATP-grasp fold, B domain"/>
    <property type="match status" value="1"/>
</dbReference>
<dbReference type="HAMAP" id="MF_00047">
    <property type="entry name" value="Dala_Dala_lig"/>
    <property type="match status" value="1"/>
</dbReference>
<dbReference type="InterPro" id="IPR011761">
    <property type="entry name" value="ATP-grasp"/>
</dbReference>
<dbReference type="InterPro" id="IPR013815">
    <property type="entry name" value="ATP_grasp_subdomain_1"/>
</dbReference>
<dbReference type="InterPro" id="IPR000291">
    <property type="entry name" value="D-Ala_lig_Van_CS"/>
</dbReference>
<dbReference type="InterPro" id="IPR005905">
    <property type="entry name" value="D_ala_D_ala"/>
</dbReference>
<dbReference type="InterPro" id="IPR011095">
    <property type="entry name" value="Dala_Dala_lig_C"/>
</dbReference>
<dbReference type="InterPro" id="IPR011127">
    <property type="entry name" value="Dala_Dala_lig_N"/>
</dbReference>
<dbReference type="InterPro" id="IPR016185">
    <property type="entry name" value="PreATP-grasp_dom_sf"/>
</dbReference>
<dbReference type="NCBIfam" id="TIGR01205">
    <property type="entry name" value="D_ala_D_alaTIGR"/>
    <property type="match status" value="1"/>
</dbReference>
<dbReference type="NCBIfam" id="NF002378">
    <property type="entry name" value="PRK01372.1"/>
    <property type="match status" value="1"/>
</dbReference>
<dbReference type="PANTHER" id="PTHR23132">
    <property type="entry name" value="D-ALANINE--D-ALANINE LIGASE"/>
    <property type="match status" value="1"/>
</dbReference>
<dbReference type="PANTHER" id="PTHR23132:SF23">
    <property type="entry name" value="D-ALANINE--D-ALANINE LIGASE B"/>
    <property type="match status" value="1"/>
</dbReference>
<dbReference type="Pfam" id="PF07478">
    <property type="entry name" value="Dala_Dala_lig_C"/>
    <property type="match status" value="1"/>
</dbReference>
<dbReference type="Pfam" id="PF01820">
    <property type="entry name" value="Dala_Dala_lig_N"/>
    <property type="match status" value="1"/>
</dbReference>
<dbReference type="PIRSF" id="PIRSF039102">
    <property type="entry name" value="Ddl/VanB"/>
    <property type="match status" value="1"/>
</dbReference>
<dbReference type="SUPFAM" id="SSF56059">
    <property type="entry name" value="Glutathione synthetase ATP-binding domain-like"/>
    <property type="match status" value="1"/>
</dbReference>
<dbReference type="SUPFAM" id="SSF52440">
    <property type="entry name" value="PreATP-grasp domain"/>
    <property type="match status" value="1"/>
</dbReference>
<dbReference type="PROSITE" id="PS50975">
    <property type="entry name" value="ATP_GRASP"/>
    <property type="match status" value="1"/>
</dbReference>
<dbReference type="PROSITE" id="PS00843">
    <property type="entry name" value="DALA_DALA_LIGASE_1"/>
    <property type="match status" value="1"/>
</dbReference>
<dbReference type="PROSITE" id="PS00844">
    <property type="entry name" value="DALA_DALA_LIGASE_2"/>
    <property type="match status" value="1"/>
</dbReference>
<protein>
    <recommendedName>
        <fullName evidence="2">D-alanine--D-alanine ligase</fullName>
        <ecNumber evidence="2">6.3.2.4</ecNumber>
    </recommendedName>
    <alternativeName>
        <fullName evidence="2">D-Ala-D-Ala ligase</fullName>
    </alternativeName>
    <alternativeName>
        <fullName evidence="2">D-alanylalanine synthetase</fullName>
    </alternativeName>
</protein>
<reference key="1">
    <citation type="submission" date="2006-02" db="EMBL/GenBank/DDBJ databases">
        <title>Complete sequence of chromosome of Jannaschia sp. CCS1.</title>
        <authorList>
            <consortium name="US DOE Joint Genome Institute"/>
            <person name="Copeland A."/>
            <person name="Lucas S."/>
            <person name="Lapidus A."/>
            <person name="Barry K."/>
            <person name="Detter J.C."/>
            <person name="Glavina del Rio T."/>
            <person name="Hammon N."/>
            <person name="Israni S."/>
            <person name="Pitluck S."/>
            <person name="Brettin T."/>
            <person name="Bruce D."/>
            <person name="Han C."/>
            <person name="Tapia R."/>
            <person name="Gilna P."/>
            <person name="Chertkov O."/>
            <person name="Saunders E."/>
            <person name="Schmutz J."/>
            <person name="Larimer F."/>
            <person name="Land M."/>
            <person name="Kyrpides N."/>
            <person name="Lykidis A."/>
            <person name="Moran M.A."/>
            <person name="Belas R."/>
            <person name="Ye W."/>
            <person name="Buchan A."/>
            <person name="Gonzalez J.M."/>
            <person name="Schell M.A."/>
            <person name="Richardson P."/>
        </authorList>
    </citation>
    <scope>NUCLEOTIDE SEQUENCE [LARGE SCALE GENOMIC DNA]</scope>
    <source>
        <strain>CCS1</strain>
    </source>
</reference>
<keyword id="KW-0067">ATP-binding</keyword>
<keyword id="KW-0133">Cell shape</keyword>
<keyword id="KW-0961">Cell wall biogenesis/degradation</keyword>
<keyword id="KW-0963">Cytoplasm</keyword>
<keyword id="KW-0436">Ligase</keyword>
<keyword id="KW-0460">Magnesium</keyword>
<keyword id="KW-0464">Manganese</keyword>
<keyword id="KW-0479">Metal-binding</keyword>
<keyword id="KW-0547">Nucleotide-binding</keyword>
<keyword id="KW-0573">Peptidoglycan synthesis</keyword>
<keyword id="KW-1185">Reference proteome</keyword>
<organism>
    <name type="scientific">Jannaschia sp. (strain CCS1)</name>
    <dbReference type="NCBI Taxonomy" id="290400"/>
    <lineage>
        <taxon>Bacteria</taxon>
        <taxon>Pseudomonadati</taxon>
        <taxon>Pseudomonadota</taxon>
        <taxon>Alphaproteobacteria</taxon>
        <taxon>Rhodobacterales</taxon>
        <taxon>Roseobacteraceae</taxon>
        <taxon>Jannaschia</taxon>
    </lineage>
</organism>